<comment type="function">
    <text evidence="2">Acts as a viral G-protein coupled receptor that constitutively activates host alphai-type G-proteins, thereby inhibiting host forskolin-triggered CREB activation.</text>
</comment>
<comment type="subcellular location">
    <subcellularLocation>
        <location evidence="2">Host cell membrane</location>
    </subcellularLocation>
    <subcellularLocation>
        <location evidence="2">Host endoplasmic reticulum membrane</location>
    </subcellularLocation>
</comment>
<comment type="similarity">
    <text evidence="3">Belongs to the G-protein coupled receptor 1 family.</text>
</comment>
<name>VGA5_ALHV1</name>
<accession>O36364</accession>
<dbReference type="EMBL" id="AF005370">
    <property type="protein sequence ID" value="AAC58061.1"/>
    <property type="molecule type" value="Genomic_DNA"/>
</dbReference>
<dbReference type="PIR" id="T03109">
    <property type="entry name" value="T03109"/>
</dbReference>
<dbReference type="RefSeq" id="NP_065513.1">
    <property type="nucleotide sequence ID" value="NC_002531.1"/>
</dbReference>
<dbReference type="SMR" id="O36364"/>
<dbReference type="KEGG" id="vg:911749"/>
<dbReference type="Proteomes" id="UP000000941">
    <property type="component" value="Segment"/>
</dbReference>
<dbReference type="GO" id="GO:0044167">
    <property type="term" value="C:host cell endoplasmic reticulum membrane"/>
    <property type="evidence" value="ECO:0007669"/>
    <property type="project" value="UniProtKB-SubCell"/>
</dbReference>
<dbReference type="GO" id="GO:0020002">
    <property type="term" value="C:host cell plasma membrane"/>
    <property type="evidence" value="ECO:0007669"/>
    <property type="project" value="UniProtKB-SubCell"/>
</dbReference>
<dbReference type="GO" id="GO:0016020">
    <property type="term" value="C:membrane"/>
    <property type="evidence" value="ECO:0007669"/>
    <property type="project" value="UniProtKB-KW"/>
</dbReference>
<dbReference type="GO" id="GO:0004930">
    <property type="term" value="F:G protein-coupled receptor activity"/>
    <property type="evidence" value="ECO:0007669"/>
    <property type="project" value="UniProtKB-KW"/>
</dbReference>
<dbReference type="Gene3D" id="1.20.1070.10">
    <property type="entry name" value="Rhodopsin 7-helix transmembrane proteins"/>
    <property type="match status" value="1"/>
</dbReference>
<keyword id="KW-0297">G-protein coupled receptor</keyword>
<keyword id="KW-1032">Host cell membrane</keyword>
<keyword id="KW-1038">Host endoplasmic reticulum</keyword>
<keyword id="KW-1043">Host membrane</keyword>
<keyword id="KW-0472">Membrane</keyword>
<keyword id="KW-0675">Receptor</keyword>
<keyword id="KW-1185">Reference proteome</keyword>
<keyword id="KW-0807">Transducer</keyword>
<keyword id="KW-0812">Transmembrane</keyword>
<keyword id="KW-1133">Transmembrane helix</keyword>
<feature type="chain" id="PRO_0000405748" description="G-protein coupled receptor A5">
    <location>
        <begin position="1"/>
        <end position="302"/>
    </location>
</feature>
<feature type="topological domain" description="Extracellular" evidence="1">
    <location>
        <begin position="1"/>
        <end position="20"/>
    </location>
</feature>
<feature type="transmembrane region" description="Helical" evidence="1">
    <location>
        <begin position="21"/>
        <end position="41"/>
    </location>
</feature>
<feature type="topological domain" description="Cytoplasmic" evidence="1">
    <location>
        <begin position="42"/>
        <end position="50"/>
    </location>
</feature>
<feature type="transmembrane region" description="Helical" evidence="1">
    <location>
        <begin position="51"/>
        <end position="71"/>
    </location>
</feature>
<feature type="topological domain" description="Extracellular" evidence="1">
    <location>
        <begin position="72"/>
        <end position="81"/>
    </location>
</feature>
<feature type="transmembrane region" description="Helical" evidence="1">
    <location>
        <begin position="82"/>
        <end position="102"/>
    </location>
</feature>
<feature type="topological domain" description="Cytoplasmic" evidence="1">
    <location>
        <begin position="103"/>
        <end position="122"/>
    </location>
</feature>
<feature type="transmembrane region" description="Helical" evidence="1">
    <location>
        <begin position="123"/>
        <end position="143"/>
    </location>
</feature>
<feature type="topological domain" description="Extracellular" evidence="1">
    <location>
        <begin position="144"/>
        <end position="173"/>
    </location>
</feature>
<feature type="transmembrane region" description="Helical" evidence="1">
    <location>
        <begin position="174"/>
        <end position="194"/>
    </location>
</feature>
<feature type="topological domain" description="Cytoplasmic" evidence="1">
    <location>
        <begin position="195"/>
        <end position="208"/>
    </location>
</feature>
<feature type="transmembrane region" description="Helical" evidence="1">
    <location>
        <begin position="209"/>
        <end position="229"/>
    </location>
</feature>
<feature type="topological domain" description="Extracellular" evidence="1">
    <location>
        <begin position="230"/>
        <end position="249"/>
    </location>
</feature>
<feature type="transmembrane region" description="Helical" evidence="1">
    <location>
        <begin position="250"/>
        <end position="270"/>
    </location>
</feature>
<feature type="topological domain" description="Cytoplasmic" evidence="1">
    <location>
        <begin position="271"/>
        <end position="302"/>
    </location>
</feature>
<protein>
    <recommendedName>
        <fullName>G-protein coupled receptor A5</fullName>
    </recommendedName>
</protein>
<evidence type="ECO:0000255" key="1"/>
<evidence type="ECO:0000269" key="2">
    <source>
    </source>
</evidence>
<evidence type="ECO:0000305" key="3"/>
<proteinExistence type="inferred from homology"/>
<organismHost>
    <name type="scientific">Connochaetes taurinus</name>
    <name type="common">Blue wildebeest</name>
    <dbReference type="NCBI Taxonomy" id="9927"/>
</organismHost>
<organism>
    <name type="scientific">Alcelaphine herpesvirus 1 (strain C500)</name>
    <name type="common">AlHV-1</name>
    <name type="synonym">Malignant catarrhal fever virus</name>
    <dbReference type="NCBI Taxonomy" id="654901"/>
    <lineage>
        <taxon>Viruses</taxon>
        <taxon>Duplodnaviria</taxon>
        <taxon>Heunggongvirae</taxon>
        <taxon>Peploviricota</taxon>
        <taxon>Herviviricetes</taxon>
        <taxon>Herpesvirales</taxon>
        <taxon>Orthoherpesviridae</taxon>
        <taxon>Gammaherpesvirinae</taxon>
        <taxon>Macavirus</taxon>
        <taxon>Macavirus alcelaphinegamma1</taxon>
    </lineage>
</organism>
<sequence>MADSSNSSLNCTAIHDQTVLILGQVFNSVWLFISVIFLYIFACKLCFRPRIYLWLSFYTLGFMLWVLCKVLQEYVTGKFKCVITNCIGDFCLVFLSCIMLGIMLDRYLKIQGTLRGGMKDIHIGIFVSASCFGSLMIALLDGLHMGDSEKLQFNGTESFKCLPATSVSSYKAQLMFKSIFCIICIIMCLILTCLTAKKVLGTRLRKKYVIVGNVGLLSFVNILLWVMIACGLLKQALESNLSLCPTKQSTYIYPYTMPVTVIFVLVIYLFSSTHMKNAMRKSGQIRHSLSSPNQVQSSFRLV</sequence>
<gene>
    <name type="primary">A5</name>
</gene>
<reference key="1">
    <citation type="journal article" date="1997" name="J. Virol.">
        <title>Primary structure of the alcelaphine herpesvirus 1 genome.</title>
        <authorList>
            <person name="Ensser A."/>
            <person name="Pflanz R."/>
            <person name="Fleckenstein B."/>
        </authorList>
    </citation>
    <scope>NUCLEOTIDE SEQUENCE [LARGE SCALE GENOMIC DNA]</scope>
</reference>
<reference key="2">
    <citation type="journal article" date="2007" name="J. Gen. Virol.">
        <title>The A5 gene of alcelaphine herpesvirus 1 encodes a constitutively active G-protein-coupled receptor that is non-essential for the induction of malignant catarrhal fever in rabbits.</title>
        <authorList>
            <person name="Boudry C."/>
            <person name="Markine-Goriaynoff N."/>
            <person name="Delforge C."/>
            <person name="Springael J.Y."/>
            <person name="de Leval L."/>
            <person name="Drion P."/>
            <person name="Russell G."/>
            <person name="Haig D.M."/>
            <person name="Vanderplasschen A.F."/>
            <person name="Dewals B."/>
        </authorList>
    </citation>
    <scope>FUNCTION</scope>
    <scope>SUBCELLULAR LOCATION</scope>
</reference>